<reference key="1">
    <citation type="submission" date="1997-10" db="EMBL/GenBank/DDBJ databases">
        <title>Characterization of a nodM homologous gene in the symbiotic cyanobacterium Nostoc PCC 9229.</title>
        <authorList>
            <person name="Viterbo A."/>
            <person name="Matveyev A."/>
            <person name="Rasmussen U."/>
            <person name="Bergman B."/>
        </authorList>
    </citation>
    <scope>NUCLEOTIDE SEQUENCE [GENOMIC DNA]</scope>
</reference>
<accession>O68280</accession>
<comment type="function">
    <text evidence="1">Catalyzes the first step in hexosamine metabolism, converting fructose-6P into glucosamine-6P using glutamine as a nitrogen source.</text>
</comment>
<comment type="catalytic activity">
    <reaction evidence="1">
        <text>D-fructose 6-phosphate + L-glutamine = D-glucosamine 6-phosphate + L-glutamate</text>
        <dbReference type="Rhea" id="RHEA:13237"/>
        <dbReference type="ChEBI" id="CHEBI:29985"/>
        <dbReference type="ChEBI" id="CHEBI:58359"/>
        <dbReference type="ChEBI" id="CHEBI:58725"/>
        <dbReference type="ChEBI" id="CHEBI:61527"/>
        <dbReference type="EC" id="2.6.1.16"/>
    </reaction>
</comment>
<comment type="subunit">
    <text evidence="1">Homodimer.</text>
</comment>
<comment type="subcellular location">
    <subcellularLocation>
        <location evidence="1">Cytoplasm</location>
    </subcellularLocation>
</comment>
<dbReference type="EC" id="2.6.1.16" evidence="1"/>
<dbReference type="EMBL" id="AF028734">
    <property type="protein sequence ID" value="AAC17973.1"/>
    <property type="molecule type" value="Genomic_DNA"/>
</dbReference>
<dbReference type="SMR" id="O68280"/>
<dbReference type="GO" id="GO:0005829">
    <property type="term" value="C:cytosol"/>
    <property type="evidence" value="ECO:0007669"/>
    <property type="project" value="TreeGrafter"/>
</dbReference>
<dbReference type="GO" id="GO:0097367">
    <property type="term" value="F:carbohydrate derivative binding"/>
    <property type="evidence" value="ECO:0007669"/>
    <property type="project" value="InterPro"/>
</dbReference>
<dbReference type="GO" id="GO:0004360">
    <property type="term" value="F:glutamine-fructose-6-phosphate transaminase (isomerizing) activity"/>
    <property type="evidence" value="ECO:0007669"/>
    <property type="project" value="UniProtKB-UniRule"/>
</dbReference>
<dbReference type="GO" id="GO:0005975">
    <property type="term" value="P:carbohydrate metabolic process"/>
    <property type="evidence" value="ECO:0007669"/>
    <property type="project" value="UniProtKB-UniRule"/>
</dbReference>
<dbReference type="GO" id="GO:0006002">
    <property type="term" value="P:fructose 6-phosphate metabolic process"/>
    <property type="evidence" value="ECO:0007669"/>
    <property type="project" value="TreeGrafter"/>
</dbReference>
<dbReference type="GO" id="GO:0006487">
    <property type="term" value="P:protein N-linked glycosylation"/>
    <property type="evidence" value="ECO:0007669"/>
    <property type="project" value="TreeGrafter"/>
</dbReference>
<dbReference type="GO" id="GO:0006047">
    <property type="term" value="P:UDP-N-acetylglucosamine metabolic process"/>
    <property type="evidence" value="ECO:0007669"/>
    <property type="project" value="TreeGrafter"/>
</dbReference>
<dbReference type="CDD" id="cd00714">
    <property type="entry name" value="GFAT"/>
    <property type="match status" value="1"/>
</dbReference>
<dbReference type="CDD" id="cd05008">
    <property type="entry name" value="SIS_GlmS_GlmD_1"/>
    <property type="match status" value="1"/>
</dbReference>
<dbReference type="CDD" id="cd05009">
    <property type="entry name" value="SIS_GlmS_GlmD_2"/>
    <property type="match status" value="1"/>
</dbReference>
<dbReference type="FunFam" id="3.40.50.10490:FF:000001">
    <property type="entry name" value="Glutamine--fructose-6-phosphate aminotransferase [isomerizing]"/>
    <property type="match status" value="1"/>
</dbReference>
<dbReference type="FunFam" id="3.40.50.10490:FF:000002">
    <property type="entry name" value="Glutamine--fructose-6-phosphate aminotransferase [isomerizing]"/>
    <property type="match status" value="1"/>
</dbReference>
<dbReference type="FunFam" id="3.60.20.10:FF:000006">
    <property type="entry name" value="Glutamine--fructose-6-phosphate aminotransferase [isomerizing]"/>
    <property type="match status" value="1"/>
</dbReference>
<dbReference type="Gene3D" id="3.40.50.10490">
    <property type="entry name" value="Glucose-6-phosphate isomerase like protein, domain 1"/>
    <property type="match status" value="2"/>
</dbReference>
<dbReference type="Gene3D" id="3.60.20.10">
    <property type="entry name" value="Glutamine Phosphoribosylpyrophosphate, subunit 1, domain 1"/>
    <property type="match status" value="1"/>
</dbReference>
<dbReference type="HAMAP" id="MF_00164">
    <property type="entry name" value="GlmS"/>
    <property type="match status" value="1"/>
</dbReference>
<dbReference type="InterPro" id="IPR017932">
    <property type="entry name" value="GATase_2_dom"/>
</dbReference>
<dbReference type="InterPro" id="IPR005855">
    <property type="entry name" value="GFAT"/>
</dbReference>
<dbReference type="InterPro" id="IPR047084">
    <property type="entry name" value="GFAT_N"/>
</dbReference>
<dbReference type="InterPro" id="IPR035466">
    <property type="entry name" value="GlmS/AgaS_SIS"/>
</dbReference>
<dbReference type="InterPro" id="IPR035490">
    <property type="entry name" value="GlmS/FrlB_SIS"/>
</dbReference>
<dbReference type="InterPro" id="IPR029055">
    <property type="entry name" value="Ntn_hydrolases_N"/>
</dbReference>
<dbReference type="InterPro" id="IPR001347">
    <property type="entry name" value="SIS_dom"/>
</dbReference>
<dbReference type="InterPro" id="IPR046348">
    <property type="entry name" value="SIS_dom_sf"/>
</dbReference>
<dbReference type="NCBIfam" id="TIGR01135">
    <property type="entry name" value="glmS"/>
    <property type="match status" value="1"/>
</dbReference>
<dbReference type="NCBIfam" id="NF001484">
    <property type="entry name" value="PRK00331.1"/>
    <property type="match status" value="1"/>
</dbReference>
<dbReference type="PANTHER" id="PTHR10937">
    <property type="entry name" value="GLUCOSAMINE--FRUCTOSE-6-PHOSPHATE AMINOTRANSFERASE, ISOMERIZING"/>
    <property type="match status" value="1"/>
</dbReference>
<dbReference type="PANTHER" id="PTHR10937:SF0">
    <property type="entry name" value="GLUTAMINE--FRUCTOSE-6-PHOSPHATE TRANSAMINASE (ISOMERIZING)"/>
    <property type="match status" value="1"/>
</dbReference>
<dbReference type="Pfam" id="PF13522">
    <property type="entry name" value="GATase_6"/>
    <property type="match status" value="1"/>
</dbReference>
<dbReference type="Pfam" id="PF01380">
    <property type="entry name" value="SIS"/>
    <property type="match status" value="2"/>
</dbReference>
<dbReference type="SUPFAM" id="SSF56235">
    <property type="entry name" value="N-terminal nucleophile aminohydrolases (Ntn hydrolases)"/>
    <property type="match status" value="1"/>
</dbReference>
<dbReference type="SUPFAM" id="SSF53697">
    <property type="entry name" value="SIS domain"/>
    <property type="match status" value="1"/>
</dbReference>
<dbReference type="PROSITE" id="PS51278">
    <property type="entry name" value="GATASE_TYPE_2"/>
    <property type="match status" value="1"/>
</dbReference>
<dbReference type="PROSITE" id="PS51464">
    <property type="entry name" value="SIS"/>
    <property type="match status" value="2"/>
</dbReference>
<feature type="initiator methionine" description="Removed" evidence="1">
    <location>
        <position position="1"/>
    </location>
</feature>
<feature type="chain" id="PRO_0000135362" description="Glutamine--fructose-6-phosphate aminotransferase [isomerizing]">
    <location>
        <begin position="2"/>
        <end position="627"/>
    </location>
</feature>
<feature type="domain" description="Glutamine amidotransferase type-2" evidence="1">
    <location>
        <begin position="2"/>
        <end position="224"/>
    </location>
</feature>
<feature type="domain" description="SIS 1" evidence="1">
    <location>
        <begin position="293"/>
        <end position="442"/>
    </location>
</feature>
<feature type="domain" description="SIS 2" evidence="1">
    <location>
        <begin position="476"/>
        <end position="617"/>
    </location>
</feature>
<feature type="active site" description="Nucleophile; for GATase activity" evidence="1">
    <location>
        <position position="2"/>
    </location>
</feature>
<feature type="active site" description="For Fru-6P isomerization activity" evidence="1">
    <location>
        <position position="622"/>
    </location>
</feature>
<proteinExistence type="inferred from homology"/>
<protein>
    <recommendedName>
        <fullName evidence="1">Glutamine--fructose-6-phosphate aminotransferase [isomerizing]</fullName>
        <ecNumber evidence="1">2.6.1.16</ecNumber>
    </recommendedName>
    <alternativeName>
        <fullName evidence="1">D-fructose-6-phosphate amidotransferase</fullName>
    </alternativeName>
    <alternativeName>
        <fullName evidence="1">GFAT</fullName>
    </alternativeName>
    <alternativeName>
        <fullName evidence="1">Glucosamine-6-phosphate synthase</fullName>
    </alternativeName>
    <alternativeName>
        <fullName evidence="1">Hexosephosphate aminotransferase</fullName>
    </alternativeName>
    <alternativeName>
        <fullName evidence="1">L-glutamine--D-fructose-6-phosphate amidotransferase</fullName>
    </alternativeName>
</protein>
<gene>
    <name evidence="1" type="primary">glmS</name>
    <name type="synonym">nodM</name>
</gene>
<name>GLMS_NOSS9</name>
<sequence length="627" mass="68770">MCGIVGYIGTQAATDILLAGLEKLEYRGYDSAGIATVWEGEINCVRAKGKLHNLRSKLELIETPAQIGIGHTRWATHGKPEEYNAHPHVDTAMPVAVQNGIIENYRELREELKAKGHVFRSETDTEVIPHLIAEILKNFSASSSSSDFLEAVSQAVNRLEGAFALAVVCADYPDELIVVRQQAPLVIGFGQGEFFCASDTPAIVAYTRAVLPLENGEIARLTPLGIEIYNFAGHRLKKQPRLLNLNPTMVVKTGFKHFMLKEIHEQPGVVRASLEAYFNNGRGKWRSPINLRLPENLYTDLEQIHIVACGTSWHAALIGKYLIEQLAGISTQVHYASEYRYAPSPLTSNTLIIGVTQSGETADTLAALAMEKERRQGKEAKYEARLLGITNRPESSLLSHLVPNIISTLAGIEIGVLATKTFTAQLMAFYALALDLAAHRQTASKETLEKIINGLREIPKDIESTLESQERLTEQLAHEFAETQDFIFLGRGINFPIALEGALKLKEISYIHAEGYPAGEMKHGPIALLDAKVPVVAIAVPGSVYEKVISNAQEAKARDSRLIGVTPVKDGEAGEIFNDLLPVSHVEELLSPLLTVVPLQLLAYHIAARRGLDVDQPRNLAKSVTVE</sequence>
<keyword id="KW-0032">Aminotransferase</keyword>
<keyword id="KW-0963">Cytoplasm</keyword>
<keyword id="KW-0315">Glutamine amidotransferase</keyword>
<keyword id="KW-0677">Repeat</keyword>
<keyword id="KW-0808">Transferase</keyword>
<organism>
    <name type="scientific">Nostoc sp. (strain PCC 9229)</name>
    <dbReference type="NCBI Taxonomy" id="70817"/>
    <lineage>
        <taxon>Bacteria</taxon>
        <taxon>Bacillati</taxon>
        <taxon>Cyanobacteriota</taxon>
        <taxon>Cyanophyceae</taxon>
        <taxon>Nostocales</taxon>
        <taxon>Nostocaceae</taxon>
        <taxon>Nostoc</taxon>
    </lineage>
</organism>
<evidence type="ECO:0000255" key="1">
    <source>
        <dbReference type="HAMAP-Rule" id="MF_00164"/>
    </source>
</evidence>